<dbReference type="EC" id="7.5.2.6" evidence="1"/>
<dbReference type="EMBL" id="AE017220">
    <property type="protein sequence ID" value="AAX64847.1"/>
    <property type="molecule type" value="Genomic_DNA"/>
</dbReference>
<dbReference type="RefSeq" id="WP_000551246.1">
    <property type="nucleotide sequence ID" value="NC_006905.1"/>
</dbReference>
<dbReference type="SMR" id="Q57R14"/>
<dbReference type="KEGG" id="sec:SCH_0941"/>
<dbReference type="HOGENOM" id="CLU_000604_84_3_6"/>
<dbReference type="Proteomes" id="UP000000538">
    <property type="component" value="Chromosome"/>
</dbReference>
<dbReference type="GO" id="GO:0005886">
    <property type="term" value="C:plasma membrane"/>
    <property type="evidence" value="ECO:0007669"/>
    <property type="project" value="UniProtKB-SubCell"/>
</dbReference>
<dbReference type="GO" id="GO:0015421">
    <property type="term" value="F:ABC-type oligopeptide transporter activity"/>
    <property type="evidence" value="ECO:0007669"/>
    <property type="project" value="TreeGrafter"/>
</dbReference>
<dbReference type="GO" id="GO:0005524">
    <property type="term" value="F:ATP binding"/>
    <property type="evidence" value="ECO:0007669"/>
    <property type="project" value="UniProtKB-KW"/>
</dbReference>
<dbReference type="GO" id="GO:0016887">
    <property type="term" value="F:ATP hydrolysis activity"/>
    <property type="evidence" value="ECO:0007669"/>
    <property type="project" value="InterPro"/>
</dbReference>
<dbReference type="GO" id="GO:0034040">
    <property type="term" value="F:ATPase-coupled lipid transmembrane transporter activity"/>
    <property type="evidence" value="ECO:0007669"/>
    <property type="project" value="InterPro"/>
</dbReference>
<dbReference type="CDD" id="cd18552">
    <property type="entry name" value="ABC_6TM_MsbA_like"/>
    <property type="match status" value="1"/>
</dbReference>
<dbReference type="CDD" id="cd03251">
    <property type="entry name" value="ABCC_MsbA"/>
    <property type="match status" value="1"/>
</dbReference>
<dbReference type="FunFam" id="1.20.1560.10:FF:000008">
    <property type="entry name" value="Lipid A export ATP-binding/permease protein MsbA"/>
    <property type="match status" value="1"/>
</dbReference>
<dbReference type="FunFam" id="3.40.50.300:FF:000140">
    <property type="entry name" value="Lipid A export ATP-binding/permease protein MsbA"/>
    <property type="match status" value="1"/>
</dbReference>
<dbReference type="Gene3D" id="1.20.1560.10">
    <property type="entry name" value="ABC transporter type 1, transmembrane domain"/>
    <property type="match status" value="1"/>
</dbReference>
<dbReference type="Gene3D" id="3.40.50.300">
    <property type="entry name" value="P-loop containing nucleotide triphosphate hydrolases"/>
    <property type="match status" value="1"/>
</dbReference>
<dbReference type="InterPro" id="IPR003593">
    <property type="entry name" value="AAA+_ATPase"/>
</dbReference>
<dbReference type="InterPro" id="IPR011527">
    <property type="entry name" value="ABC1_TM_dom"/>
</dbReference>
<dbReference type="InterPro" id="IPR036640">
    <property type="entry name" value="ABC1_TM_sf"/>
</dbReference>
<dbReference type="InterPro" id="IPR003439">
    <property type="entry name" value="ABC_transporter-like_ATP-bd"/>
</dbReference>
<dbReference type="InterPro" id="IPR017871">
    <property type="entry name" value="ABC_transporter-like_CS"/>
</dbReference>
<dbReference type="InterPro" id="IPR011917">
    <property type="entry name" value="ABC_transpr_lipidA"/>
</dbReference>
<dbReference type="InterPro" id="IPR027417">
    <property type="entry name" value="P-loop_NTPase"/>
</dbReference>
<dbReference type="InterPro" id="IPR039421">
    <property type="entry name" value="Type_1_exporter"/>
</dbReference>
<dbReference type="NCBIfam" id="TIGR02203">
    <property type="entry name" value="MsbA_lipidA"/>
    <property type="match status" value="1"/>
</dbReference>
<dbReference type="NCBIfam" id="NF008381">
    <property type="entry name" value="PRK11176.1"/>
    <property type="match status" value="1"/>
</dbReference>
<dbReference type="PANTHER" id="PTHR43394:SF1">
    <property type="entry name" value="ATP-BINDING CASSETTE SUB-FAMILY B MEMBER 10, MITOCHONDRIAL"/>
    <property type="match status" value="1"/>
</dbReference>
<dbReference type="PANTHER" id="PTHR43394">
    <property type="entry name" value="ATP-DEPENDENT PERMEASE MDL1, MITOCHONDRIAL"/>
    <property type="match status" value="1"/>
</dbReference>
<dbReference type="Pfam" id="PF00664">
    <property type="entry name" value="ABC_membrane"/>
    <property type="match status" value="1"/>
</dbReference>
<dbReference type="Pfam" id="PF00005">
    <property type="entry name" value="ABC_tran"/>
    <property type="match status" value="1"/>
</dbReference>
<dbReference type="SMART" id="SM00382">
    <property type="entry name" value="AAA"/>
    <property type="match status" value="1"/>
</dbReference>
<dbReference type="SUPFAM" id="SSF90123">
    <property type="entry name" value="ABC transporter transmembrane region"/>
    <property type="match status" value="1"/>
</dbReference>
<dbReference type="SUPFAM" id="SSF52540">
    <property type="entry name" value="P-loop containing nucleoside triphosphate hydrolases"/>
    <property type="match status" value="1"/>
</dbReference>
<dbReference type="PROSITE" id="PS50929">
    <property type="entry name" value="ABC_TM1F"/>
    <property type="match status" value="1"/>
</dbReference>
<dbReference type="PROSITE" id="PS00211">
    <property type="entry name" value="ABC_TRANSPORTER_1"/>
    <property type="match status" value="1"/>
</dbReference>
<dbReference type="PROSITE" id="PS50893">
    <property type="entry name" value="ABC_TRANSPORTER_2"/>
    <property type="match status" value="1"/>
</dbReference>
<dbReference type="PROSITE" id="PS51239">
    <property type="entry name" value="MSBA"/>
    <property type="match status" value="1"/>
</dbReference>
<organism>
    <name type="scientific">Salmonella choleraesuis (strain SC-B67)</name>
    <dbReference type="NCBI Taxonomy" id="321314"/>
    <lineage>
        <taxon>Bacteria</taxon>
        <taxon>Pseudomonadati</taxon>
        <taxon>Pseudomonadota</taxon>
        <taxon>Gammaproteobacteria</taxon>
        <taxon>Enterobacterales</taxon>
        <taxon>Enterobacteriaceae</taxon>
        <taxon>Salmonella</taxon>
    </lineage>
</organism>
<gene>
    <name evidence="1" type="primary">msbA</name>
    <name type="ordered locus">SCH_0941</name>
</gene>
<proteinExistence type="inferred from homology"/>
<accession>Q57R14</accession>
<reference key="1">
    <citation type="journal article" date="2005" name="Nucleic Acids Res.">
        <title>The genome sequence of Salmonella enterica serovar Choleraesuis, a highly invasive and resistant zoonotic pathogen.</title>
        <authorList>
            <person name="Chiu C.-H."/>
            <person name="Tang P."/>
            <person name="Chu C."/>
            <person name="Hu S."/>
            <person name="Bao Q."/>
            <person name="Yu J."/>
            <person name="Chou Y.-Y."/>
            <person name="Wang H.-S."/>
            <person name="Lee Y.-S."/>
        </authorList>
    </citation>
    <scope>NUCLEOTIDE SEQUENCE [LARGE SCALE GENOMIC DNA]</scope>
    <source>
        <strain>SC-B67</strain>
    </source>
</reference>
<protein>
    <recommendedName>
        <fullName evidence="1">ATP-dependent lipid A-core flippase</fullName>
        <ecNumber evidence="1">7.5.2.6</ecNumber>
    </recommendedName>
    <alternativeName>
        <fullName evidence="1">Lipid A export ATP-binding/permease protein MsbA</fullName>
    </alternativeName>
</protein>
<evidence type="ECO:0000255" key="1">
    <source>
        <dbReference type="HAMAP-Rule" id="MF_01703"/>
    </source>
</evidence>
<name>MSBA_SALCH</name>
<sequence>MHNDKDLSTWQTFRRLWPTIAPFKAGLIVAGIALILNAASDTFMLSLLKPLLDDGFGKTDRSVLLWMPLVVIGLMILRGITSYISSYCISWVSGKVVMTMRRRLFGHMMGMPVAFFDKQSTGTLLSRITYDSEQVASSSSGALITVVREGASIIGLFIMMFYYSWQLSIILVVLAPIVSIAIRVVSKRFRSISKNMQNTMGQVTTSAEQMLKGHKEVLIFGGQEVETKRFDKVSNKMRLQGMKMVSASSISDPIIQLIASLALAFVLYAASFPSVMDSLTAGTITVVFSSMIALMRPLKSLTNVNAQFQRGMAACQTLFAILDSEQEKDEGKRVIDRATGDLEFRNVTFTYPGREVPALRNINLKIPAGKTVALVGRSGSGKSTIASLITRFYDIDEGHILMDGHDLREYTLASLRNQVALVSQNVHLFNDTVANNIAYARTEEYSREQIEEAARMAYAMDFINKMDNGLDTIIGENGVLLSGGQRQRIAIARALLRDSPILILDEATSALDTESERAIQAALDELQKNRTSLVIAHRLSTIEQADEIVVVEDGIIVERGTHSELLAQHGVYAQLHKMQFGQ</sequence>
<feature type="chain" id="PRO_0000271650" description="ATP-dependent lipid A-core flippase">
    <location>
        <begin position="1"/>
        <end position="582"/>
    </location>
</feature>
<feature type="transmembrane region" description="Helical" evidence="1">
    <location>
        <begin position="16"/>
        <end position="36"/>
    </location>
</feature>
<feature type="transmembrane region" description="Helical" evidence="1">
    <location>
        <begin position="64"/>
        <end position="84"/>
    </location>
</feature>
<feature type="transmembrane region" description="Helical" evidence="1">
    <location>
        <begin position="153"/>
        <end position="173"/>
    </location>
</feature>
<feature type="transmembrane region" description="Helical" evidence="1">
    <location>
        <begin position="253"/>
        <end position="273"/>
    </location>
</feature>
<feature type="transmembrane region" description="Helical" evidence="1">
    <location>
        <begin position="275"/>
        <end position="295"/>
    </location>
</feature>
<feature type="domain" description="ABC transmembrane type-1" evidence="1">
    <location>
        <begin position="28"/>
        <end position="310"/>
    </location>
</feature>
<feature type="domain" description="ABC transporter" evidence="1">
    <location>
        <begin position="342"/>
        <end position="578"/>
    </location>
</feature>
<feature type="binding site" evidence="1">
    <location>
        <begin position="376"/>
        <end position="383"/>
    </location>
    <ligand>
        <name>ATP</name>
        <dbReference type="ChEBI" id="CHEBI:30616"/>
    </ligand>
</feature>
<keyword id="KW-0067">ATP-binding</keyword>
<keyword id="KW-0997">Cell inner membrane</keyword>
<keyword id="KW-1003">Cell membrane</keyword>
<keyword id="KW-0445">Lipid transport</keyword>
<keyword id="KW-0472">Membrane</keyword>
<keyword id="KW-0547">Nucleotide-binding</keyword>
<keyword id="KW-1278">Translocase</keyword>
<keyword id="KW-0812">Transmembrane</keyword>
<keyword id="KW-1133">Transmembrane helix</keyword>
<keyword id="KW-0813">Transport</keyword>
<comment type="function">
    <text evidence="1">Involved in lipopolysaccharide (LPS) biosynthesis. Translocates lipid A-core from the inner to the outer leaflet of the inner membrane. Transmembrane domains (TMD) form a pore in the inner membrane and the ATP-binding domain (NBD) is responsible for energy generation.</text>
</comment>
<comment type="catalytic activity">
    <reaction evidence="1">
        <text>ATP + H2O + lipid A-core oligosaccharideSide 1 = ADP + phosphate + lipid A-core oligosaccharideSide 2.</text>
        <dbReference type="EC" id="7.5.2.6"/>
    </reaction>
</comment>
<comment type="subunit">
    <text evidence="1">Homodimer.</text>
</comment>
<comment type="subcellular location">
    <subcellularLocation>
        <location evidence="1">Cell inner membrane</location>
        <topology evidence="1">Multi-pass membrane protein</topology>
    </subcellularLocation>
</comment>
<comment type="domain">
    <text evidence="1">In MsbA the ATP-binding domain (NBD) and the transmembrane domain (TMD) are fused.</text>
</comment>
<comment type="similarity">
    <text evidence="1">Belongs to the ABC transporter superfamily. Lipid exporter (TC 3.A.1.106) family.</text>
</comment>